<sequence>MPELPEVEVTRQGIAPFLVEQTVVDLVIRNGSLRWPVPDIAKQIIGQVIRQVRRRAKYLLIDTDAGTSIVHLGMSGSLRILPHDTPVEKHDHIDLVLANGRILRFNDPRRFGAWLWCELPEEAHPLLAKLGPEPLTNAFNVTQLAAALAGKKKAIKLCLMDNHIVVGVGNIYANEALFAAGIHPEAEAGKIDIERLTVLVAEVKQILAHAIKQGGTTLKDFTNADGKPGYFAQKLHVYSRGGETCTSCGNLLSEIRLGQRTTVFCGICQTR</sequence>
<proteinExistence type="inferred from homology"/>
<reference key="1">
    <citation type="submission" date="2007-11" db="EMBL/GenBank/DDBJ databases">
        <title>Complete sequence of chromosome of Shewanella baltica OS195.</title>
        <authorList>
            <consortium name="US DOE Joint Genome Institute"/>
            <person name="Copeland A."/>
            <person name="Lucas S."/>
            <person name="Lapidus A."/>
            <person name="Barry K."/>
            <person name="Glavina del Rio T."/>
            <person name="Dalin E."/>
            <person name="Tice H."/>
            <person name="Pitluck S."/>
            <person name="Chain P."/>
            <person name="Malfatti S."/>
            <person name="Shin M."/>
            <person name="Vergez L."/>
            <person name="Schmutz J."/>
            <person name="Larimer F."/>
            <person name="Land M."/>
            <person name="Hauser L."/>
            <person name="Kyrpides N."/>
            <person name="Kim E."/>
            <person name="Brettar I."/>
            <person name="Rodrigues J."/>
            <person name="Konstantinidis K."/>
            <person name="Klappenbach J."/>
            <person name="Hofle M."/>
            <person name="Tiedje J."/>
            <person name="Richardson P."/>
        </authorList>
    </citation>
    <scope>NUCLEOTIDE SEQUENCE [LARGE SCALE GENOMIC DNA]</scope>
    <source>
        <strain>OS195</strain>
    </source>
</reference>
<comment type="function">
    <text evidence="2">Involved in base excision repair of DNA damaged by oxidation or by mutagenic agents. Acts as a DNA glycosylase that recognizes and removes damaged bases. Has a preference for oxidized purines, such as 7,8-dihydro-8-oxoguanine (8-oxoG). Has AP (apurinic/apyrimidinic) lyase activity and introduces nicks in the DNA strand. Cleaves the DNA backbone by beta-delta elimination to generate a single-strand break at the site of the removed base with both 3'- and 5'-phosphates.</text>
</comment>
<comment type="catalytic activity">
    <reaction evidence="2">
        <text>Hydrolysis of DNA containing ring-opened 7-methylguanine residues, releasing 2,6-diamino-4-hydroxy-5-(N-methyl)formamidopyrimidine.</text>
        <dbReference type="EC" id="3.2.2.23"/>
    </reaction>
</comment>
<comment type="catalytic activity">
    <reaction evidence="2">
        <text>2'-deoxyribonucleotide-(2'-deoxyribose 5'-phosphate)-2'-deoxyribonucleotide-DNA = a 3'-end 2'-deoxyribonucleotide-(2,3-dehydro-2,3-deoxyribose 5'-phosphate)-DNA + a 5'-end 5'-phospho-2'-deoxyribonucleoside-DNA + H(+)</text>
        <dbReference type="Rhea" id="RHEA:66592"/>
        <dbReference type="Rhea" id="RHEA-COMP:13180"/>
        <dbReference type="Rhea" id="RHEA-COMP:16897"/>
        <dbReference type="Rhea" id="RHEA-COMP:17067"/>
        <dbReference type="ChEBI" id="CHEBI:15378"/>
        <dbReference type="ChEBI" id="CHEBI:136412"/>
        <dbReference type="ChEBI" id="CHEBI:157695"/>
        <dbReference type="ChEBI" id="CHEBI:167181"/>
        <dbReference type="EC" id="4.2.99.18"/>
    </reaction>
</comment>
<comment type="cofactor">
    <cofactor evidence="2">
        <name>Zn(2+)</name>
        <dbReference type="ChEBI" id="CHEBI:29105"/>
    </cofactor>
    <text evidence="2">Binds 1 zinc ion per subunit.</text>
</comment>
<comment type="subunit">
    <text evidence="2">Monomer.</text>
</comment>
<comment type="similarity">
    <text evidence="2">Belongs to the FPG family.</text>
</comment>
<feature type="initiator methionine" description="Removed" evidence="1">
    <location>
        <position position="1"/>
    </location>
</feature>
<feature type="chain" id="PRO_1000075712" description="Formamidopyrimidine-DNA glycosylase">
    <location>
        <begin position="2"/>
        <end position="271"/>
    </location>
</feature>
<feature type="zinc finger region" description="FPG-type" evidence="2">
    <location>
        <begin position="236"/>
        <end position="270"/>
    </location>
</feature>
<feature type="active site" description="Schiff-base intermediate with DNA" evidence="2">
    <location>
        <position position="2"/>
    </location>
</feature>
<feature type="active site" description="Proton donor" evidence="2">
    <location>
        <position position="3"/>
    </location>
</feature>
<feature type="active site" description="Proton donor; for beta-elimination activity" evidence="2">
    <location>
        <position position="57"/>
    </location>
</feature>
<feature type="active site" description="Proton donor; for delta-elimination activity" evidence="2">
    <location>
        <position position="260"/>
    </location>
</feature>
<feature type="binding site" evidence="2">
    <location>
        <position position="90"/>
    </location>
    <ligand>
        <name>DNA</name>
        <dbReference type="ChEBI" id="CHEBI:16991"/>
    </ligand>
</feature>
<feature type="binding site" evidence="2">
    <location>
        <position position="109"/>
    </location>
    <ligand>
        <name>DNA</name>
        <dbReference type="ChEBI" id="CHEBI:16991"/>
    </ligand>
</feature>
<feature type="binding site" evidence="2">
    <location>
        <position position="151"/>
    </location>
    <ligand>
        <name>DNA</name>
        <dbReference type="ChEBI" id="CHEBI:16991"/>
    </ligand>
</feature>
<evidence type="ECO:0000250" key="1"/>
<evidence type="ECO:0000255" key="2">
    <source>
        <dbReference type="HAMAP-Rule" id="MF_00103"/>
    </source>
</evidence>
<accession>A9KW47</accession>
<protein>
    <recommendedName>
        <fullName evidence="2">Formamidopyrimidine-DNA glycosylase</fullName>
        <shortName evidence="2">Fapy-DNA glycosylase</shortName>
        <ecNumber evidence="2">3.2.2.23</ecNumber>
    </recommendedName>
    <alternativeName>
        <fullName evidence="2">DNA-(apurinic or apyrimidinic site) lyase MutM</fullName>
        <shortName evidence="2">AP lyase MutM</shortName>
        <ecNumber evidence="2">4.2.99.18</ecNumber>
    </alternativeName>
</protein>
<name>FPG_SHEB9</name>
<gene>
    <name evidence="2" type="primary">mutM</name>
    <name evidence="2" type="synonym">fpg</name>
    <name type="ordered locus">Sbal195_4464</name>
</gene>
<dbReference type="EC" id="3.2.2.23" evidence="2"/>
<dbReference type="EC" id="4.2.99.18" evidence="2"/>
<dbReference type="EMBL" id="CP000891">
    <property type="protein sequence ID" value="ABX51621.1"/>
    <property type="molecule type" value="Genomic_DNA"/>
</dbReference>
<dbReference type="RefSeq" id="WP_006084728.1">
    <property type="nucleotide sequence ID" value="NC_009997.1"/>
</dbReference>
<dbReference type="SMR" id="A9KW47"/>
<dbReference type="GeneID" id="11774418"/>
<dbReference type="KEGG" id="sbn:Sbal195_4464"/>
<dbReference type="HOGENOM" id="CLU_038423_1_1_6"/>
<dbReference type="Proteomes" id="UP000000770">
    <property type="component" value="Chromosome"/>
</dbReference>
<dbReference type="GO" id="GO:0034039">
    <property type="term" value="F:8-oxo-7,8-dihydroguanine DNA N-glycosylase activity"/>
    <property type="evidence" value="ECO:0007669"/>
    <property type="project" value="TreeGrafter"/>
</dbReference>
<dbReference type="GO" id="GO:0140078">
    <property type="term" value="F:class I DNA-(apurinic or apyrimidinic site) endonuclease activity"/>
    <property type="evidence" value="ECO:0007669"/>
    <property type="project" value="UniProtKB-EC"/>
</dbReference>
<dbReference type="GO" id="GO:0003684">
    <property type="term" value="F:damaged DNA binding"/>
    <property type="evidence" value="ECO:0007669"/>
    <property type="project" value="InterPro"/>
</dbReference>
<dbReference type="GO" id="GO:0008270">
    <property type="term" value="F:zinc ion binding"/>
    <property type="evidence" value="ECO:0007669"/>
    <property type="project" value="UniProtKB-UniRule"/>
</dbReference>
<dbReference type="GO" id="GO:0006284">
    <property type="term" value="P:base-excision repair"/>
    <property type="evidence" value="ECO:0007669"/>
    <property type="project" value="InterPro"/>
</dbReference>
<dbReference type="CDD" id="cd08966">
    <property type="entry name" value="EcFpg-like_N"/>
    <property type="match status" value="1"/>
</dbReference>
<dbReference type="FunFam" id="1.10.8.50:FF:000003">
    <property type="entry name" value="Formamidopyrimidine-DNA glycosylase"/>
    <property type="match status" value="1"/>
</dbReference>
<dbReference type="FunFam" id="3.20.190.10:FF:000001">
    <property type="entry name" value="Formamidopyrimidine-DNA glycosylase"/>
    <property type="match status" value="1"/>
</dbReference>
<dbReference type="Gene3D" id="1.10.8.50">
    <property type="match status" value="1"/>
</dbReference>
<dbReference type="Gene3D" id="3.20.190.10">
    <property type="entry name" value="MutM-like, N-terminal"/>
    <property type="match status" value="1"/>
</dbReference>
<dbReference type="HAMAP" id="MF_00103">
    <property type="entry name" value="Fapy_DNA_glycosyl"/>
    <property type="match status" value="1"/>
</dbReference>
<dbReference type="InterPro" id="IPR015886">
    <property type="entry name" value="DNA_glyclase/AP_lyase_DNA-bd"/>
</dbReference>
<dbReference type="InterPro" id="IPR015887">
    <property type="entry name" value="DNA_glyclase_Znf_dom_DNA_BS"/>
</dbReference>
<dbReference type="InterPro" id="IPR020629">
    <property type="entry name" value="Formamido-pyr_DNA_Glyclase"/>
</dbReference>
<dbReference type="InterPro" id="IPR012319">
    <property type="entry name" value="FPG_cat"/>
</dbReference>
<dbReference type="InterPro" id="IPR035937">
    <property type="entry name" value="MutM-like_N-ter"/>
</dbReference>
<dbReference type="InterPro" id="IPR010979">
    <property type="entry name" value="Ribosomal_uS13-like_H2TH"/>
</dbReference>
<dbReference type="InterPro" id="IPR000214">
    <property type="entry name" value="Znf_DNA_glyclase/AP_lyase"/>
</dbReference>
<dbReference type="InterPro" id="IPR010663">
    <property type="entry name" value="Znf_FPG/IleRS"/>
</dbReference>
<dbReference type="NCBIfam" id="TIGR00577">
    <property type="entry name" value="fpg"/>
    <property type="match status" value="1"/>
</dbReference>
<dbReference type="NCBIfam" id="NF002211">
    <property type="entry name" value="PRK01103.1"/>
    <property type="match status" value="1"/>
</dbReference>
<dbReference type="PANTHER" id="PTHR22993">
    <property type="entry name" value="FORMAMIDOPYRIMIDINE-DNA GLYCOSYLASE"/>
    <property type="match status" value="1"/>
</dbReference>
<dbReference type="PANTHER" id="PTHR22993:SF9">
    <property type="entry name" value="FORMAMIDOPYRIMIDINE-DNA GLYCOSYLASE"/>
    <property type="match status" value="1"/>
</dbReference>
<dbReference type="Pfam" id="PF01149">
    <property type="entry name" value="Fapy_DNA_glyco"/>
    <property type="match status" value="1"/>
</dbReference>
<dbReference type="Pfam" id="PF06831">
    <property type="entry name" value="H2TH"/>
    <property type="match status" value="1"/>
</dbReference>
<dbReference type="Pfam" id="PF06827">
    <property type="entry name" value="zf-FPG_IleRS"/>
    <property type="match status" value="1"/>
</dbReference>
<dbReference type="SMART" id="SM00898">
    <property type="entry name" value="Fapy_DNA_glyco"/>
    <property type="match status" value="1"/>
</dbReference>
<dbReference type="SMART" id="SM01232">
    <property type="entry name" value="H2TH"/>
    <property type="match status" value="1"/>
</dbReference>
<dbReference type="SUPFAM" id="SSF57716">
    <property type="entry name" value="Glucocorticoid receptor-like (DNA-binding domain)"/>
    <property type="match status" value="1"/>
</dbReference>
<dbReference type="SUPFAM" id="SSF81624">
    <property type="entry name" value="N-terminal domain of MutM-like DNA repair proteins"/>
    <property type="match status" value="1"/>
</dbReference>
<dbReference type="SUPFAM" id="SSF46946">
    <property type="entry name" value="S13-like H2TH domain"/>
    <property type="match status" value="1"/>
</dbReference>
<dbReference type="PROSITE" id="PS51068">
    <property type="entry name" value="FPG_CAT"/>
    <property type="match status" value="1"/>
</dbReference>
<dbReference type="PROSITE" id="PS01242">
    <property type="entry name" value="ZF_FPG_1"/>
    <property type="match status" value="1"/>
</dbReference>
<dbReference type="PROSITE" id="PS51066">
    <property type="entry name" value="ZF_FPG_2"/>
    <property type="match status" value="1"/>
</dbReference>
<keyword id="KW-0227">DNA damage</keyword>
<keyword id="KW-0234">DNA repair</keyword>
<keyword id="KW-0238">DNA-binding</keyword>
<keyword id="KW-0326">Glycosidase</keyword>
<keyword id="KW-0378">Hydrolase</keyword>
<keyword id="KW-0456">Lyase</keyword>
<keyword id="KW-0479">Metal-binding</keyword>
<keyword id="KW-0511">Multifunctional enzyme</keyword>
<keyword id="KW-0862">Zinc</keyword>
<keyword id="KW-0863">Zinc-finger</keyword>
<organism>
    <name type="scientific">Shewanella baltica (strain OS195)</name>
    <dbReference type="NCBI Taxonomy" id="399599"/>
    <lineage>
        <taxon>Bacteria</taxon>
        <taxon>Pseudomonadati</taxon>
        <taxon>Pseudomonadota</taxon>
        <taxon>Gammaproteobacteria</taxon>
        <taxon>Alteromonadales</taxon>
        <taxon>Shewanellaceae</taxon>
        <taxon>Shewanella</taxon>
    </lineage>
</organism>